<keyword id="KW-1185">Reference proteome</keyword>
<name>FB41_ARATH</name>
<sequence length="63" mass="7284">MEKSQSSCDTRKRSVVVDVDNTKDRISDLPNRILGKIIVKLPLDEAVRIMALSKRWKSIWDDN</sequence>
<dbReference type="EMBL" id="AC012463">
    <property type="protein sequence ID" value="AAF99795.1"/>
    <property type="molecule type" value="Genomic_DNA"/>
</dbReference>
<dbReference type="EMBL" id="CP002684">
    <property type="status" value="NOT_ANNOTATED_CDS"/>
    <property type="molecule type" value="Genomic_DNA"/>
</dbReference>
<dbReference type="PIR" id="G96517">
    <property type="entry name" value="G96517"/>
</dbReference>
<dbReference type="SMR" id="Q9FZE7"/>
<dbReference type="FunCoup" id="Q9FZE7">
    <property type="interactions" value="33"/>
</dbReference>
<dbReference type="Araport" id="AT1G47702"/>
<dbReference type="TAIR" id="AT1G47702"/>
<dbReference type="InParanoid" id="Q9FZE7"/>
<dbReference type="PRO" id="PR:Q9FZE7"/>
<dbReference type="Proteomes" id="UP000006548">
    <property type="component" value="Chromosome 1"/>
</dbReference>
<dbReference type="ExpressionAtlas" id="Q9FZE7">
    <property type="expression patterns" value="baseline and differential"/>
</dbReference>
<dbReference type="Gene3D" id="1.20.1280.50">
    <property type="match status" value="1"/>
</dbReference>
<dbReference type="InterPro" id="IPR036047">
    <property type="entry name" value="F-box-like_dom_sf"/>
</dbReference>
<dbReference type="InterPro" id="IPR001810">
    <property type="entry name" value="F-box_dom"/>
</dbReference>
<dbReference type="Pfam" id="PF00646">
    <property type="entry name" value="F-box"/>
    <property type="match status" value="1"/>
</dbReference>
<dbReference type="SUPFAM" id="SSF81383">
    <property type="entry name" value="F-box domain"/>
    <property type="match status" value="1"/>
</dbReference>
<dbReference type="PROSITE" id="PS50181">
    <property type="entry name" value="FBOX"/>
    <property type="match status" value="1"/>
</dbReference>
<gene>
    <name type="ordered locus">At1g47702</name>
    <name type="ORF">T2E6.24</name>
</gene>
<feature type="chain" id="PRO_0000283317" description="Putative F-box protein At1g47702">
    <location>
        <begin position="1"/>
        <end position="63"/>
    </location>
</feature>
<feature type="domain" description="F-box" evidence="1">
    <location>
        <begin position="23"/>
        <end position="63"/>
    </location>
</feature>
<reference key="1">
    <citation type="journal article" date="2000" name="Nature">
        <title>Sequence and analysis of chromosome 1 of the plant Arabidopsis thaliana.</title>
        <authorList>
            <person name="Theologis A."/>
            <person name="Ecker J.R."/>
            <person name="Palm C.J."/>
            <person name="Federspiel N.A."/>
            <person name="Kaul S."/>
            <person name="White O."/>
            <person name="Alonso J."/>
            <person name="Altafi H."/>
            <person name="Araujo R."/>
            <person name="Bowman C.L."/>
            <person name="Brooks S.Y."/>
            <person name="Buehler E."/>
            <person name="Chan A."/>
            <person name="Chao Q."/>
            <person name="Chen H."/>
            <person name="Cheuk R.F."/>
            <person name="Chin C.W."/>
            <person name="Chung M.K."/>
            <person name="Conn L."/>
            <person name="Conway A.B."/>
            <person name="Conway A.R."/>
            <person name="Creasy T.H."/>
            <person name="Dewar K."/>
            <person name="Dunn P."/>
            <person name="Etgu P."/>
            <person name="Feldblyum T.V."/>
            <person name="Feng J.-D."/>
            <person name="Fong B."/>
            <person name="Fujii C.Y."/>
            <person name="Gill J.E."/>
            <person name="Goldsmith A.D."/>
            <person name="Haas B."/>
            <person name="Hansen N.F."/>
            <person name="Hughes B."/>
            <person name="Huizar L."/>
            <person name="Hunter J.L."/>
            <person name="Jenkins J."/>
            <person name="Johnson-Hopson C."/>
            <person name="Khan S."/>
            <person name="Khaykin E."/>
            <person name="Kim C.J."/>
            <person name="Koo H.L."/>
            <person name="Kremenetskaia I."/>
            <person name="Kurtz D.B."/>
            <person name="Kwan A."/>
            <person name="Lam B."/>
            <person name="Langin-Hooper S."/>
            <person name="Lee A."/>
            <person name="Lee J.M."/>
            <person name="Lenz C.A."/>
            <person name="Li J.H."/>
            <person name="Li Y.-P."/>
            <person name="Lin X."/>
            <person name="Liu S.X."/>
            <person name="Liu Z.A."/>
            <person name="Luros J.S."/>
            <person name="Maiti R."/>
            <person name="Marziali A."/>
            <person name="Militscher J."/>
            <person name="Miranda M."/>
            <person name="Nguyen M."/>
            <person name="Nierman W.C."/>
            <person name="Osborne B.I."/>
            <person name="Pai G."/>
            <person name="Peterson J."/>
            <person name="Pham P.K."/>
            <person name="Rizzo M."/>
            <person name="Rooney T."/>
            <person name="Rowley D."/>
            <person name="Sakano H."/>
            <person name="Salzberg S.L."/>
            <person name="Schwartz J.R."/>
            <person name="Shinn P."/>
            <person name="Southwick A.M."/>
            <person name="Sun H."/>
            <person name="Tallon L.J."/>
            <person name="Tambunga G."/>
            <person name="Toriumi M.J."/>
            <person name="Town C.D."/>
            <person name="Utterback T."/>
            <person name="Van Aken S."/>
            <person name="Vaysberg M."/>
            <person name="Vysotskaia V.S."/>
            <person name="Walker M."/>
            <person name="Wu D."/>
            <person name="Yu G."/>
            <person name="Fraser C.M."/>
            <person name="Venter J.C."/>
            <person name="Davis R.W."/>
        </authorList>
    </citation>
    <scope>NUCLEOTIDE SEQUENCE [LARGE SCALE GENOMIC DNA]</scope>
    <source>
        <strain>cv. Columbia</strain>
    </source>
</reference>
<reference key="2">
    <citation type="journal article" date="2017" name="Plant J.">
        <title>Araport11: a complete reannotation of the Arabidopsis thaliana reference genome.</title>
        <authorList>
            <person name="Cheng C.Y."/>
            <person name="Krishnakumar V."/>
            <person name="Chan A.P."/>
            <person name="Thibaud-Nissen F."/>
            <person name="Schobel S."/>
            <person name="Town C.D."/>
        </authorList>
    </citation>
    <scope>GENOME REANNOTATION</scope>
    <source>
        <strain>cv. Columbia</strain>
    </source>
</reference>
<organism>
    <name type="scientific">Arabidopsis thaliana</name>
    <name type="common">Mouse-ear cress</name>
    <dbReference type="NCBI Taxonomy" id="3702"/>
    <lineage>
        <taxon>Eukaryota</taxon>
        <taxon>Viridiplantae</taxon>
        <taxon>Streptophyta</taxon>
        <taxon>Embryophyta</taxon>
        <taxon>Tracheophyta</taxon>
        <taxon>Spermatophyta</taxon>
        <taxon>Magnoliopsida</taxon>
        <taxon>eudicotyledons</taxon>
        <taxon>Gunneridae</taxon>
        <taxon>Pentapetalae</taxon>
        <taxon>rosids</taxon>
        <taxon>malvids</taxon>
        <taxon>Brassicales</taxon>
        <taxon>Brassicaceae</taxon>
        <taxon>Camelineae</taxon>
        <taxon>Arabidopsis</taxon>
    </lineage>
</organism>
<evidence type="ECO:0000255" key="1">
    <source>
        <dbReference type="PROSITE-ProRule" id="PRU00080"/>
    </source>
</evidence>
<protein>
    <recommendedName>
        <fullName>Putative F-box protein At1g47702</fullName>
    </recommendedName>
</protein>
<accession>Q9FZE7</accession>
<proteinExistence type="predicted"/>